<accession>A4W871</accession>
<comment type="function">
    <text evidence="1">Involved in base excision repair of DNA damaged by oxidation or by mutagenic agents. Acts as a DNA glycosylase that recognizes and removes damaged bases. Has a preference for oxidized pyrimidines, such as thymine glycol, 5,6-dihydrouracil and 5,6-dihydrothymine. Has AP (apurinic/apyrimidinic) lyase activity and introduces nicks in the DNA strand. Cleaves the DNA backbone by beta-delta elimination to generate a single-strand break at the site of the removed base with both 3'- and 5'-phosphates.</text>
</comment>
<comment type="catalytic activity">
    <reaction evidence="1">
        <text>2'-deoxyribonucleotide-(2'-deoxyribose 5'-phosphate)-2'-deoxyribonucleotide-DNA = a 3'-end 2'-deoxyribonucleotide-(2,3-dehydro-2,3-deoxyribose 5'-phosphate)-DNA + a 5'-end 5'-phospho-2'-deoxyribonucleoside-DNA + H(+)</text>
        <dbReference type="Rhea" id="RHEA:66592"/>
        <dbReference type="Rhea" id="RHEA-COMP:13180"/>
        <dbReference type="Rhea" id="RHEA-COMP:16897"/>
        <dbReference type="Rhea" id="RHEA-COMP:17067"/>
        <dbReference type="ChEBI" id="CHEBI:15378"/>
        <dbReference type="ChEBI" id="CHEBI:136412"/>
        <dbReference type="ChEBI" id="CHEBI:157695"/>
        <dbReference type="ChEBI" id="CHEBI:167181"/>
        <dbReference type="EC" id="4.2.99.18"/>
    </reaction>
</comment>
<comment type="cofactor">
    <cofactor evidence="1">
        <name>Zn(2+)</name>
        <dbReference type="ChEBI" id="CHEBI:29105"/>
    </cofactor>
    <text evidence="1">Binds 1 zinc ion per subunit.</text>
</comment>
<comment type="similarity">
    <text evidence="1">Belongs to the FPG family.</text>
</comment>
<gene>
    <name evidence="1" type="primary">nei</name>
    <name type="ordered locus">Ent638_1220</name>
</gene>
<proteinExistence type="inferred from homology"/>
<name>END8_ENT38</name>
<organism>
    <name type="scientific">Enterobacter sp. (strain 638)</name>
    <dbReference type="NCBI Taxonomy" id="399742"/>
    <lineage>
        <taxon>Bacteria</taxon>
        <taxon>Pseudomonadati</taxon>
        <taxon>Pseudomonadota</taxon>
        <taxon>Gammaproteobacteria</taxon>
        <taxon>Enterobacterales</taxon>
        <taxon>Enterobacteriaceae</taxon>
        <taxon>Enterobacter</taxon>
    </lineage>
</organism>
<reference key="1">
    <citation type="journal article" date="2010" name="PLoS Genet.">
        <title>Genome sequence of the plant growth promoting endophytic bacterium Enterobacter sp. 638.</title>
        <authorList>
            <person name="Taghavi S."/>
            <person name="van der Lelie D."/>
            <person name="Hoffman A."/>
            <person name="Zhang Y.B."/>
            <person name="Walla M.D."/>
            <person name="Vangronsveld J."/>
            <person name="Newman L."/>
            <person name="Monchy S."/>
        </authorList>
    </citation>
    <scope>NUCLEOTIDE SEQUENCE [LARGE SCALE GENOMIC DNA]</scope>
    <source>
        <strain>638</strain>
    </source>
</reference>
<sequence length="263" mass="29661">MPEGPEIRRAADSLEAAIKGKPLTNAWFAFPQLKSFESSLIGQKVTQIETRGKALLTHFSHNLTLYSHNQLYGVWRVVDAGEHPQTSRILRVRLQTADKAILLYSASDIEMLTPEQLLTHPFLQRVGPDVLDMRLTAEEVKARLLSPKFRNRQFSGLLLDQAFLAGLGNYLRVEILWEVGLAAQRKASQLSEEQLDALSHALLEIPRLSYNTRGVVDDNKHHGALFRFKVFHREGKACERCGGVIERSTLSSRPFYGCPVCQK</sequence>
<dbReference type="EC" id="3.2.2.-" evidence="1"/>
<dbReference type="EC" id="4.2.99.18" evidence="1"/>
<dbReference type="EMBL" id="CP000653">
    <property type="protein sequence ID" value="ABP59901.1"/>
    <property type="molecule type" value="Genomic_DNA"/>
</dbReference>
<dbReference type="RefSeq" id="WP_012016620.1">
    <property type="nucleotide sequence ID" value="NC_009436.1"/>
</dbReference>
<dbReference type="SMR" id="A4W871"/>
<dbReference type="STRING" id="399742.Ent638_1220"/>
<dbReference type="KEGG" id="ent:Ent638_1220"/>
<dbReference type="eggNOG" id="COG0266">
    <property type="taxonomic scope" value="Bacteria"/>
</dbReference>
<dbReference type="HOGENOM" id="CLU_038423_2_2_6"/>
<dbReference type="OrthoDB" id="5657047at2"/>
<dbReference type="Proteomes" id="UP000000230">
    <property type="component" value="Chromosome"/>
</dbReference>
<dbReference type="GO" id="GO:0140078">
    <property type="term" value="F:class I DNA-(apurinic or apyrimidinic site) endonuclease activity"/>
    <property type="evidence" value="ECO:0007669"/>
    <property type="project" value="UniProtKB-EC"/>
</dbReference>
<dbReference type="GO" id="GO:0003684">
    <property type="term" value="F:damaged DNA binding"/>
    <property type="evidence" value="ECO:0007669"/>
    <property type="project" value="InterPro"/>
</dbReference>
<dbReference type="GO" id="GO:0000703">
    <property type="term" value="F:oxidized pyrimidine nucleobase lesion DNA N-glycosylase activity"/>
    <property type="evidence" value="ECO:0007669"/>
    <property type="project" value="UniProtKB-UniRule"/>
</dbReference>
<dbReference type="GO" id="GO:0008270">
    <property type="term" value="F:zinc ion binding"/>
    <property type="evidence" value="ECO:0007669"/>
    <property type="project" value="UniProtKB-UniRule"/>
</dbReference>
<dbReference type="GO" id="GO:0006284">
    <property type="term" value="P:base-excision repair"/>
    <property type="evidence" value="ECO:0007669"/>
    <property type="project" value="InterPro"/>
</dbReference>
<dbReference type="CDD" id="cd08965">
    <property type="entry name" value="EcNei-like_N"/>
    <property type="match status" value="1"/>
</dbReference>
<dbReference type="FunFam" id="1.10.8.50:FF:000005">
    <property type="entry name" value="Endonuclease 8"/>
    <property type="match status" value="1"/>
</dbReference>
<dbReference type="FunFam" id="3.20.190.10:FF:000002">
    <property type="entry name" value="Endonuclease 8"/>
    <property type="match status" value="1"/>
</dbReference>
<dbReference type="Gene3D" id="1.10.8.50">
    <property type="match status" value="1"/>
</dbReference>
<dbReference type="Gene3D" id="3.20.190.10">
    <property type="entry name" value="MutM-like, N-terminal"/>
    <property type="match status" value="1"/>
</dbReference>
<dbReference type="HAMAP" id="MF_01253">
    <property type="entry name" value="Endonuclease_8"/>
    <property type="match status" value="1"/>
</dbReference>
<dbReference type="InterPro" id="IPR015886">
    <property type="entry name" value="DNA_glyclase/AP_lyase_DNA-bd"/>
</dbReference>
<dbReference type="InterPro" id="IPR044091">
    <property type="entry name" value="EcNei-like_N"/>
</dbReference>
<dbReference type="InterPro" id="IPR023713">
    <property type="entry name" value="Endonuclease-VIII"/>
</dbReference>
<dbReference type="InterPro" id="IPR012319">
    <property type="entry name" value="FPG_cat"/>
</dbReference>
<dbReference type="InterPro" id="IPR035937">
    <property type="entry name" value="MutM-like_N-ter"/>
</dbReference>
<dbReference type="InterPro" id="IPR010979">
    <property type="entry name" value="Ribosomal_uS13-like_H2TH"/>
</dbReference>
<dbReference type="InterPro" id="IPR000214">
    <property type="entry name" value="Znf_DNA_glyclase/AP_lyase"/>
</dbReference>
<dbReference type="NCBIfam" id="NF007763">
    <property type="entry name" value="PRK10445.1"/>
    <property type="match status" value="1"/>
</dbReference>
<dbReference type="PANTHER" id="PTHR42697">
    <property type="entry name" value="ENDONUCLEASE 8"/>
    <property type="match status" value="1"/>
</dbReference>
<dbReference type="PANTHER" id="PTHR42697:SF1">
    <property type="entry name" value="ENDONUCLEASE 8"/>
    <property type="match status" value="1"/>
</dbReference>
<dbReference type="Pfam" id="PF01149">
    <property type="entry name" value="Fapy_DNA_glyco"/>
    <property type="match status" value="1"/>
</dbReference>
<dbReference type="Pfam" id="PF06831">
    <property type="entry name" value="H2TH"/>
    <property type="match status" value="1"/>
</dbReference>
<dbReference type="SMART" id="SM00898">
    <property type="entry name" value="Fapy_DNA_glyco"/>
    <property type="match status" value="1"/>
</dbReference>
<dbReference type="SMART" id="SM01232">
    <property type="entry name" value="H2TH"/>
    <property type="match status" value="1"/>
</dbReference>
<dbReference type="SUPFAM" id="SSF57716">
    <property type="entry name" value="Glucocorticoid receptor-like (DNA-binding domain)"/>
    <property type="match status" value="1"/>
</dbReference>
<dbReference type="SUPFAM" id="SSF81624">
    <property type="entry name" value="N-terminal domain of MutM-like DNA repair proteins"/>
    <property type="match status" value="1"/>
</dbReference>
<dbReference type="SUPFAM" id="SSF46946">
    <property type="entry name" value="S13-like H2TH domain"/>
    <property type="match status" value="1"/>
</dbReference>
<dbReference type="PROSITE" id="PS51068">
    <property type="entry name" value="FPG_CAT"/>
    <property type="match status" value="1"/>
</dbReference>
<dbReference type="PROSITE" id="PS51066">
    <property type="entry name" value="ZF_FPG_2"/>
    <property type="match status" value="1"/>
</dbReference>
<feature type="initiator methionine" description="Removed" evidence="1">
    <location>
        <position position="1"/>
    </location>
</feature>
<feature type="chain" id="PRO_1000067204" description="Endonuclease 8">
    <location>
        <begin position="2"/>
        <end position="263"/>
    </location>
</feature>
<feature type="zinc finger region" description="FPG-type" evidence="1">
    <location>
        <begin position="229"/>
        <end position="263"/>
    </location>
</feature>
<feature type="active site" description="Schiff-base intermediate with DNA" evidence="1">
    <location>
        <position position="2"/>
    </location>
</feature>
<feature type="active site" description="Proton donor" evidence="1">
    <location>
        <position position="3"/>
    </location>
</feature>
<feature type="active site" description="Proton donor; for beta-elimination activity" evidence="1">
    <location>
        <position position="53"/>
    </location>
</feature>
<feature type="active site" description="Proton donor; for delta-elimination activity" evidence="1">
    <location>
        <position position="253"/>
    </location>
</feature>
<feature type="binding site" evidence="1">
    <location>
        <position position="70"/>
    </location>
    <ligand>
        <name>DNA</name>
        <dbReference type="ChEBI" id="CHEBI:16991"/>
    </ligand>
</feature>
<feature type="binding site" evidence="1">
    <location>
        <position position="125"/>
    </location>
    <ligand>
        <name>DNA</name>
        <dbReference type="ChEBI" id="CHEBI:16991"/>
    </ligand>
</feature>
<feature type="binding site" evidence="1">
    <location>
        <position position="169"/>
    </location>
    <ligand>
        <name>DNA</name>
        <dbReference type="ChEBI" id="CHEBI:16991"/>
    </ligand>
</feature>
<keyword id="KW-0227">DNA damage</keyword>
<keyword id="KW-0234">DNA repair</keyword>
<keyword id="KW-0238">DNA-binding</keyword>
<keyword id="KW-0326">Glycosidase</keyword>
<keyword id="KW-0378">Hydrolase</keyword>
<keyword id="KW-0456">Lyase</keyword>
<keyword id="KW-0479">Metal-binding</keyword>
<keyword id="KW-0511">Multifunctional enzyme</keyword>
<keyword id="KW-0862">Zinc</keyword>
<keyword id="KW-0863">Zinc-finger</keyword>
<evidence type="ECO:0000255" key="1">
    <source>
        <dbReference type="HAMAP-Rule" id="MF_01253"/>
    </source>
</evidence>
<protein>
    <recommendedName>
        <fullName evidence="1">Endonuclease 8</fullName>
    </recommendedName>
    <alternativeName>
        <fullName evidence="1">DNA glycosylase/AP lyase Nei</fullName>
        <ecNumber evidence="1">3.2.2.-</ecNumber>
        <ecNumber evidence="1">4.2.99.18</ecNumber>
    </alternativeName>
    <alternativeName>
        <fullName evidence="1">DNA-(apurinic or apyrimidinic site) lyase Nei</fullName>
    </alternativeName>
    <alternativeName>
        <fullName evidence="1">Endonuclease VIII</fullName>
    </alternativeName>
</protein>